<gene>
    <name evidence="1" type="primary">mnmG</name>
    <name evidence="1" type="synonym">gidA</name>
    <name type="ordered locus">Dtpsy_0045</name>
</gene>
<sequence>MLYPQDFDVIVVGGGHAGTEAALAAARMGSRTLLLTHNIETLGQMSCNPSIGGIGKGHLVKEVDALGGAMALATDEAGIQFRILNSSKGPAVRATRAQADRILYKAAIRRMLENQPNLWLFQQAVDDLMVEGDRVVGAVTQVGIRFRSRAVVLTAGTFLDGKIHVGLNNYAAGRAGDPPAVSLSARLKELQLPQGRLKTGTPPRIDGRSIDFSQCEEQPGDGMPGGVNEGAVPVFSFMGNAAMHPRQVPCWITHTNARTHEIIRSGFDRSPMFTGKIEGVGPRYCPSVEDKINRFADKESHQIFLEPEGLTTHEFYPNGISTSLPFDIQYDLVRSMRGLENAHILRPGYAIEYDYFDPRSLKSSFETRQIQGLFFAGQINGTTGYEEAAAQGLFAGINAALQCRGERAWVPARDEAYLGVLVDDLITKGVTEPYRMFTSRAEFRLQLREDNADMRLTDAGRRMGLVDDARWDAFSRKRDAVSRETERLKSTWVNPRNLPTVEAERVLGKAIEHEYNLFDLLRRPDVGYDALTTMDGGKYASEAVSRETLGELSAPVIEQVEIAAKYAGYIERQRDEVQRAAHFEKLRLPEDLDYMQVAALSIEVRQKLQKHRPETLGQASRISGVTPAAISLLMVHLKKGGFKGFAPQPADGVETVA</sequence>
<proteinExistence type="inferred from homology"/>
<name>MNMG_ACIET</name>
<reference key="1">
    <citation type="submission" date="2009-01" db="EMBL/GenBank/DDBJ databases">
        <title>Complete sequence of Diaphorobacter sp. TPSY.</title>
        <authorList>
            <consortium name="US DOE Joint Genome Institute"/>
            <person name="Lucas S."/>
            <person name="Copeland A."/>
            <person name="Lapidus A."/>
            <person name="Glavina del Rio T."/>
            <person name="Tice H."/>
            <person name="Bruce D."/>
            <person name="Goodwin L."/>
            <person name="Pitluck S."/>
            <person name="Chertkov O."/>
            <person name="Brettin T."/>
            <person name="Detter J.C."/>
            <person name="Han C."/>
            <person name="Larimer F."/>
            <person name="Land M."/>
            <person name="Hauser L."/>
            <person name="Kyrpides N."/>
            <person name="Mikhailova N."/>
            <person name="Coates J.D."/>
        </authorList>
    </citation>
    <scope>NUCLEOTIDE SEQUENCE [LARGE SCALE GENOMIC DNA]</scope>
    <source>
        <strain>TPSY</strain>
    </source>
</reference>
<organism>
    <name type="scientific">Acidovorax ebreus (strain TPSY)</name>
    <name type="common">Diaphorobacter sp. (strain TPSY)</name>
    <dbReference type="NCBI Taxonomy" id="535289"/>
    <lineage>
        <taxon>Bacteria</taxon>
        <taxon>Pseudomonadati</taxon>
        <taxon>Pseudomonadota</taxon>
        <taxon>Betaproteobacteria</taxon>
        <taxon>Burkholderiales</taxon>
        <taxon>Comamonadaceae</taxon>
        <taxon>Diaphorobacter</taxon>
    </lineage>
</organism>
<dbReference type="EMBL" id="CP001392">
    <property type="protein sequence ID" value="ACM31534.1"/>
    <property type="molecule type" value="Genomic_DNA"/>
</dbReference>
<dbReference type="RefSeq" id="WP_012655162.1">
    <property type="nucleotide sequence ID" value="NC_011992.1"/>
</dbReference>
<dbReference type="SMR" id="B9M9W3"/>
<dbReference type="KEGG" id="dia:Dtpsy_0045"/>
<dbReference type="eggNOG" id="COG0445">
    <property type="taxonomic scope" value="Bacteria"/>
</dbReference>
<dbReference type="HOGENOM" id="CLU_007831_2_2_4"/>
<dbReference type="Proteomes" id="UP000000450">
    <property type="component" value="Chromosome"/>
</dbReference>
<dbReference type="GO" id="GO:0005829">
    <property type="term" value="C:cytosol"/>
    <property type="evidence" value="ECO:0007669"/>
    <property type="project" value="TreeGrafter"/>
</dbReference>
<dbReference type="GO" id="GO:0050660">
    <property type="term" value="F:flavin adenine dinucleotide binding"/>
    <property type="evidence" value="ECO:0007669"/>
    <property type="project" value="UniProtKB-UniRule"/>
</dbReference>
<dbReference type="GO" id="GO:0030488">
    <property type="term" value="P:tRNA methylation"/>
    <property type="evidence" value="ECO:0007669"/>
    <property type="project" value="TreeGrafter"/>
</dbReference>
<dbReference type="GO" id="GO:0002098">
    <property type="term" value="P:tRNA wobble uridine modification"/>
    <property type="evidence" value="ECO:0007669"/>
    <property type="project" value="InterPro"/>
</dbReference>
<dbReference type="FunFam" id="1.10.10.1800:FF:000001">
    <property type="entry name" value="tRNA uridine 5-carboxymethylaminomethyl modification enzyme MnmG"/>
    <property type="match status" value="1"/>
</dbReference>
<dbReference type="FunFam" id="1.10.150.570:FF:000001">
    <property type="entry name" value="tRNA uridine 5-carboxymethylaminomethyl modification enzyme MnmG"/>
    <property type="match status" value="1"/>
</dbReference>
<dbReference type="FunFam" id="3.50.50.60:FF:000002">
    <property type="entry name" value="tRNA uridine 5-carboxymethylaminomethyl modification enzyme MnmG"/>
    <property type="match status" value="1"/>
</dbReference>
<dbReference type="FunFam" id="3.50.50.60:FF:000010">
    <property type="entry name" value="tRNA uridine 5-carboxymethylaminomethyl modification enzyme MnmG"/>
    <property type="match status" value="1"/>
</dbReference>
<dbReference type="Gene3D" id="3.50.50.60">
    <property type="entry name" value="FAD/NAD(P)-binding domain"/>
    <property type="match status" value="2"/>
</dbReference>
<dbReference type="Gene3D" id="1.10.150.570">
    <property type="entry name" value="GidA associated domain, C-terminal subdomain"/>
    <property type="match status" value="1"/>
</dbReference>
<dbReference type="Gene3D" id="1.10.10.1800">
    <property type="entry name" value="tRNA uridine 5-carboxymethylaminomethyl modification enzyme MnmG/GidA"/>
    <property type="match status" value="1"/>
</dbReference>
<dbReference type="HAMAP" id="MF_00129">
    <property type="entry name" value="MnmG_GidA"/>
    <property type="match status" value="1"/>
</dbReference>
<dbReference type="InterPro" id="IPR036188">
    <property type="entry name" value="FAD/NAD-bd_sf"/>
</dbReference>
<dbReference type="InterPro" id="IPR049312">
    <property type="entry name" value="GIDA_C_N"/>
</dbReference>
<dbReference type="InterPro" id="IPR004416">
    <property type="entry name" value="MnmG"/>
</dbReference>
<dbReference type="InterPro" id="IPR002218">
    <property type="entry name" value="MnmG-rel"/>
</dbReference>
<dbReference type="InterPro" id="IPR020595">
    <property type="entry name" value="MnmG-rel_CS"/>
</dbReference>
<dbReference type="InterPro" id="IPR026904">
    <property type="entry name" value="MnmG_C"/>
</dbReference>
<dbReference type="InterPro" id="IPR047001">
    <property type="entry name" value="MnmG_C_subdom"/>
</dbReference>
<dbReference type="InterPro" id="IPR044920">
    <property type="entry name" value="MnmG_C_subdom_sf"/>
</dbReference>
<dbReference type="InterPro" id="IPR040131">
    <property type="entry name" value="MnmG_N"/>
</dbReference>
<dbReference type="NCBIfam" id="TIGR00136">
    <property type="entry name" value="mnmG_gidA"/>
    <property type="match status" value="1"/>
</dbReference>
<dbReference type="PANTHER" id="PTHR11806">
    <property type="entry name" value="GLUCOSE INHIBITED DIVISION PROTEIN A"/>
    <property type="match status" value="1"/>
</dbReference>
<dbReference type="PANTHER" id="PTHR11806:SF0">
    <property type="entry name" value="PROTEIN MTO1 HOMOLOG, MITOCHONDRIAL"/>
    <property type="match status" value="1"/>
</dbReference>
<dbReference type="Pfam" id="PF01134">
    <property type="entry name" value="GIDA"/>
    <property type="match status" value="1"/>
</dbReference>
<dbReference type="Pfam" id="PF21680">
    <property type="entry name" value="GIDA_C_1st"/>
    <property type="match status" value="1"/>
</dbReference>
<dbReference type="Pfam" id="PF13932">
    <property type="entry name" value="SAM_GIDA_C"/>
    <property type="match status" value="1"/>
</dbReference>
<dbReference type="SMART" id="SM01228">
    <property type="entry name" value="GIDA_assoc_3"/>
    <property type="match status" value="1"/>
</dbReference>
<dbReference type="SUPFAM" id="SSF51905">
    <property type="entry name" value="FAD/NAD(P)-binding domain"/>
    <property type="match status" value="1"/>
</dbReference>
<dbReference type="PROSITE" id="PS01280">
    <property type="entry name" value="GIDA_1"/>
    <property type="match status" value="1"/>
</dbReference>
<dbReference type="PROSITE" id="PS01281">
    <property type="entry name" value="GIDA_2"/>
    <property type="match status" value="1"/>
</dbReference>
<feature type="chain" id="PRO_1000122745" description="tRNA uridine 5-carboxymethylaminomethyl modification enzyme MnmG">
    <location>
        <begin position="1"/>
        <end position="657"/>
    </location>
</feature>
<feature type="binding site" evidence="1">
    <location>
        <begin position="13"/>
        <end position="18"/>
    </location>
    <ligand>
        <name>FAD</name>
        <dbReference type="ChEBI" id="CHEBI:57692"/>
    </ligand>
</feature>
<feature type="binding site" evidence="1">
    <location>
        <begin position="281"/>
        <end position="295"/>
    </location>
    <ligand>
        <name>NAD(+)</name>
        <dbReference type="ChEBI" id="CHEBI:57540"/>
    </ligand>
</feature>
<accession>B9M9W3</accession>
<keyword id="KW-0963">Cytoplasm</keyword>
<keyword id="KW-0274">FAD</keyword>
<keyword id="KW-0285">Flavoprotein</keyword>
<keyword id="KW-0520">NAD</keyword>
<keyword id="KW-1185">Reference proteome</keyword>
<keyword id="KW-0819">tRNA processing</keyword>
<protein>
    <recommendedName>
        <fullName evidence="1">tRNA uridine 5-carboxymethylaminomethyl modification enzyme MnmG</fullName>
    </recommendedName>
    <alternativeName>
        <fullName evidence="1">Glucose-inhibited division protein A</fullName>
    </alternativeName>
</protein>
<comment type="function">
    <text evidence="1">NAD-binding protein involved in the addition of a carboxymethylaminomethyl (cmnm) group at the wobble position (U34) of certain tRNAs, forming tRNA-cmnm(5)s(2)U34.</text>
</comment>
<comment type="cofactor">
    <cofactor evidence="1">
        <name>FAD</name>
        <dbReference type="ChEBI" id="CHEBI:57692"/>
    </cofactor>
</comment>
<comment type="subunit">
    <text evidence="1">Homodimer. Heterotetramer of two MnmE and two MnmG subunits.</text>
</comment>
<comment type="subcellular location">
    <subcellularLocation>
        <location evidence="1">Cytoplasm</location>
    </subcellularLocation>
</comment>
<comment type="similarity">
    <text evidence="1">Belongs to the MnmG family.</text>
</comment>
<evidence type="ECO:0000255" key="1">
    <source>
        <dbReference type="HAMAP-Rule" id="MF_00129"/>
    </source>
</evidence>